<dbReference type="EMBL" id="DQ898156">
    <property type="protein sequence ID" value="ABI32435.1"/>
    <property type="molecule type" value="Genomic_DNA"/>
</dbReference>
<dbReference type="RefSeq" id="YP_740128.1">
    <property type="nucleotide sequence ID" value="NC_008325.1"/>
</dbReference>
<dbReference type="GeneID" id="4266754"/>
<dbReference type="OMA" id="RFSNYWW"/>
<dbReference type="GO" id="GO:0009535">
    <property type="term" value="C:chloroplast thylakoid membrane"/>
    <property type="evidence" value="ECO:0007669"/>
    <property type="project" value="UniProtKB-SubCell"/>
</dbReference>
<dbReference type="GO" id="GO:0009522">
    <property type="term" value="C:photosystem I"/>
    <property type="evidence" value="ECO:0007669"/>
    <property type="project" value="InterPro"/>
</dbReference>
<dbReference type="GO" id="GO:0015979">
    <property type="term" value="P:photosynthesis"/>
    <property type="evidence" value="ECO:0007669"/>
    <property type="project" value="UniProtKB-UniRule"/>
</dbReference>
<dbReference type="HAMAP" id="MF_00437">
    <property type="entry name" value="Ycf4"/>
    <property type="match status" value="1"/>
</dbReference>
<dbReference type="InterPro" id="IPR003359">
    <property type="entry name" value="PSI_Ycf4_assembly"/>
</dbReference>
<dbReference type="PANTHER" id="PTHR33288">
    <property type="match status" value="1"/>
</dbReference>
<dbReference type="PANTHER" id="PTHR33288:SF4">
    <property type="entry name" value="PHOTOSYSTEM I ASSEMBLY PROTEIN YCF4"/>
    <property type="match status" value="1"/>
</dbReference>
<dbReference type="Pfam" id="PF02392">
    <property type="entry name" value="Ycf4"/>
    <property type="match status" value="1"/>
</dbReference>
<comment type="function">
    <text evidence="1">Seems to be required for the assembly of the photosystem I complex.</text>
</comment>
<comment type="subcellular location">
    <subcellularLocation>
        <location evidence="1">Plastid</location>
        <location evidence="1">Chloroplast thylakoid membrane</location>
        <topology evidence="1">Multi-pass membrane protein</topology>
    </subcellularLocation>
</comment>
<comment type="similarity">
    <text evidence="1">Belongs to the Ycf4 family.</text>
</comment>
<geneLocation type="chloroplast"/>
<name>YCF4_DAUCA</name>
<reference key="1">
    <citation type="journal article" date="2006" name="BMC Genomics">
        <title>Complete plastid genome sequence of Daucus carota: implications for biotechnology and phylogeny of angiosperms.</title>
        <authorList>
            <person name="Ruhlman T."/>
            <person name="Lee S.-B."/>
            <person name="Jansen R.K."/>
            <person name="Hostetler J.B."/>
            <person name="Tallon L.J."/>
            <person name="Town C.D."/>
            <person name="Daniell H."/>
        </authorList>
    </citation>
    <scope>NUCLEOTIDE SEQUENCE [LARGE SCALE GENOMIC DNA]</scope>
    <source>
        <strain>cv. Danvers Half-long</strain>
    </source>
</reference>
<evidence type="ECO:0000255" key="1">
    <source>
        <dbReference type="HAMAP-Rule" id="MF_00437"/>
    </source>
</evidence>
<sequence length="184" mass="21178">MSCRSEHIWIQPITGSRKTSNLCWAIILFLGSLGFLLVGTSSYLGRNLISLFPSQQILFFPQGIVMSFYGIAGLFISSYLWCTISWNVGGGYDRFDRKEGMVCLFRWGFPGKNRRIFLRFLIKDIQSVRIEVKEGIYARRVLYMDIRGQGAIPLTRTDENVTPREIEQKAAELAYFLRVPIEVF</sequence>
<keyword id="KW-0150">Chloroplast</keyword>
<keyword id="KW-0472">Membrane</keyword>
<keyword id="KW-0602">Photosynthesis</keyword>
<keyword id="KW-0934">Plastid</keyword>
<keyword id="KW-0793">Thylakoid</keyword>
<keyword id="KW-0812">Transmembrane</keyword>
<keyword id="KW-1133">Transmembrane helix</keyword>
<feature type="chain" id="PRO_0000275652" description="Photosystem I assembly protein Ycf4">
    <location>
        <begin position="1"/>
        <end position="184"/>
    </location>
</feature>
<feature type="transmembrane region" description="Helical" evidence="1">
    <location>
        <begin position="22"/>
        <end position="42"/>
    </location>
</feature>
<feature type="transmembrane region" description="Helical" evidence="1">
    <location>
        <begin position="57"/>
        <end position="77"/>
    </location>
</feature>
<proteinExistence type="inferred from homology"/>
<protein>
    <recommendedName>
        <fullName evidence="1">Photosystem I assembly protein Ycf4</fullName>
    </recommendedName>
</protein>
<organism>
    <name type="scientific">Daucus carota</name>
    <name type="common">Wild carrot</name>
    <dbReference type="NCBI Taxonomy" id="4039"/>
    <lineage>
        <taxon>Eukaryota</taxon>
        <taxon>Viridiplantae</taxon>
        <taxon>Streptophyta</taxon>
        <taxon>Embryophyta</taxon>
        <taxon>Tracheophyta</taxon>
        <taxon>Spermatophyta</taxon>
        <taxon>Magnoliopsida</taxon>
        <taxon>eudicotyledons</taxon>
        <taxon>Gunneridae</taxon>
        <taxon>Pentapetalae</taxon>
        <taxon>asterids</taxon>
        <taxon>campanulids</taxon>
        <taxon>Apiales</taxon>
        <taxon>Apiaceae</taxon>
        <taxon>Apioideae</taxon>
        <taxon>Scandiceae</taxon>
        <taxon>Daucinae</taxon>
        <taxon>Daucus</taxon>
        <taxon>Daucus sect. Daucus</taxon>
    </lineage>
</organism>
<gene>
    <name evidence="1" type="primary">ycf4</name>
</gene>
<accession>Q0G9V1</accession>